<evidence type="ECO:0000250" key="1">
    <source>
        <dbReference type="UniProtKB" id="P40927"/>
    </source>
</evidence>
<evidence type="ECO:0000305" key="2"/>
<feature type="chain" id="PRO_0000160246" description="NADP-dependent malic enzyme">
    <location>
        <begin position="1"/>
        <end position="761"/>
    </location>
</feature>
<feature type="region of interest" description="Malic enzyme">
    <location>
        <begin position="1"/>
        <end position="437"/>
    </location>
</feature>
<feature type="region of interest" description="Phosphate acetyltransferase">
    <location>
        <begin position="438"/>
        <end position="761"/>
    </location>
</feature>
<feature type="active site" description="Proton donor" evidence="1">
    <location>
        <position position="49"/>
    </location>
</feature>
<feature type="active site" description="Proton acceptor" evidence="1">
    <location>
        <position position="104"/>
    </location>
</feature>
<feature type="binding site" evidence="1">
    <location>
        <position position="146"/>
    </location>
    <ligand>
        <name>a divalent metal cation</name>
        <dbReference type="ChEBI" id="CHEBI:60240"/>
    </ligand>
</feature>
<feature type="binding site" evidence="1">
    <location>
        <position position="147"/>
    </location>
    <ligand>
        <name>a divalent metal cation</name>
        <dbReference type="ChEBI" id="CHEBI:60240"/>
    </ligand>
</feature>
<feature type="binding site" evidence="1">
    <location>
        <position position="172"/>
    </location>
    <ligand>
        <name>a divalent metal cation</name>
        <dbReference type="ChEBI" id="CHEBI:60240"/>
    </ligand>
</feature>
<feature type="binding site" evidence="1">
    <location>
        <begin position="205"/>
        <end position="208"/>
    </location>
    <ligand>
        <name>NADP(+)</name>
        <dbReference type="ChEBI" id="CHEBI:58349"/>
    </ligand>
</feature>
<feature type="binding site" evidence="1">
    <location>
        <position position="297"/>
    </location>
    <ligand>
        <name>NADP(+)</name>
        <dbReference type="ChEBI" id="CHEBI:58349"/>
    </ligand>
</feature>
<feature type="binding site" evidence="1">
    <location>
        <position position="329"/>
    </location>
    <ligand>
        <name>NADP(+)</name>
        <dbReference type="ChEBI" id="CHEBI:58349"/>
    </ligand>
</feature>
<feature type="sequence conflict" description="In Ref. 1; AAB82460." evidence="2" ref="1">
    <original>L</original>
    <variation>F</variation>
    <location>
        <position position="228"/>
    </location>
</feature>
<feature type="sequence conflict" description="In Ref. 1; AAB82460." evidence="2" ref="1">
    <original>DMPTSEELADIAEEAAGLAKRLGYVPRV</original>
    <variation>KHADLRGAG</variation>
    <location>
        <begin position="609"/>
        <end position="636"/>
    </location>
</feature>
<feature type="sequence conflict" description="In Ref. 1; AAB82460." evidence="2" ref="1">
    <original>T</original>
    <variation>TRRGSAESRKTAGTSSVAASPDG</variation>
    <location>
        <position position="761"/>
    </location>
</feature>
<accession>O30808</accession>
<reference key="1">
    <citation type="journal article" date="1998" name="J. Biol. Chem.">
        <title>Chimeric structure of the NAD(P)+- and NADP+-dependent malic enzymes of Rhizobium (Sinorhizobium) meliloti.</title>
        <authorList>
            <person name="Mitsch M.J."/>
            <person name="Voegele R.T."/>
            <person name="Cowie A."/>
            <person name="Oesteras M."/>
            <person name="Finan T.M."/>
        </authorList>
    </citation>
    <scope>NUCLEOTIDE SEQUENCE [GENOMIC DNA]</scope>
    <scope>CHARACTERIZATION</scope>
    <source>
        <strain>RCR2011 / SU47</strain>
    </source>
</reference>
<reference key="2">
    <citation type="journal article" date="2001" name="Proc. Natl. Acad. Sci. U.S.A.">
        <title>Analysis of the chromosome sequence of the legume symbiont Sinorhizobium meliloti strain 1021.</title>
        <authorList>
            <person name="Capela D."/>
            <person name="Barloy-Hubler F."/>
            <person name="Gouzy J."/>
            <person name="Bothe G."/>
            <person name="Ampe F."/>
            <person name="Batut J."/>
            <person name="Boistard P."/>
            <person name="Becker A."/>
            <person name="Boutry M."/>
            <person name="Cadieu E."/>
            <person name="Dreano S."/>
            <person name="Gloux S."/>
            <person name="Godrie T."/>
            <person name="Goffeau A."/>
            <person name="Kahn D."/>
            <person name="Kiss E."/>
            <person name="Lelaure V."/>
            <person name="Masuy D."/>
            <person name="Pohl T."/>
            <person name="Portetelle D."/>
            <person name="Puehler A."/>
            <person name="Purnelle B."/>
            <person name="Ramsperger U."/>
            <person name="Renard C."/>
            <person name="Thebault P."/>
            <person name="Vandenbol M."/>
            <person name="Weidner S."/>
            <person name="Galibert F."/>
        </authorList>
    </citation>
    <scope>NUCLEOTIDE SEQUENCE [LARGE SCALE GENOMIC DNA]</scope>
    <source>
        <strain>1021</strain>
    </source>
</reference>
<reference key="3">
    <citation type="journal article" date="2001" name="Science">
        <title>The composite genome of the legume symbiont Sinorhizobium meliloti.</title>
        <authorList>
            <person name="Galibert F."/>
            <person name="Finan T.M."/>
            <person name="Long S.R."/>
            <person name="Puehler A."/>
            <person name="Abola P."/>
            <person name="Ampe F."/>
            <person name="Barloy-Hubler F."/>
            <person name="Barnett M.J."/>
            <person name="Becker A."/>
            <person name="Boistard P."/>
            <person name="Bothe G."/>
            <person name="Boutry M."/>
            <person name="Bowser L."/>
            <person name="Buhrmester J."/>
            <person name="Cadieu E."/>
            <person name="Capela D."/>
            <person name="Chain P."/>
            <person name="Cowie A."/>
            <person name="Davis R.W."/>
            <person name="Dreano S."/>
            <person name="Federspiel N.A."/>
            <person name="Fisher R.F."/>
            <person name="Gloux S."/>
            <person name="Godrie T."/>
            <person name="Goffeau A."/>
            <person name="Golding B."/>
            <person name="Gouzy J."/>
            <person name="Gurjal M."/>
            <person name="Hernandez-Lucas I."/>
            <person name="Hong A."/>
            <person name="Huizar L."/>
            <person name="Hyman R.W."/>
            <person name="Jones T."/>
            <person name="Kahn D."/>
            <person name="Kahn M.L."/>
            <person name="Kalman S."/>
            <person name="Keating D.H."/>
            <person name="Kiss E."/>
            <person name="Komp C."/>
            <person name="Lelaure V."/>
            <person name="Masuy D."/>
            <person name="Palm C."/>
            <person name="Peck M.C."/>
            <person name="Pohl T.M."/>
            <person name="Portetelle D."/>
            <person name="Purnelle B."/>
            <person name="Ramsperger U."/>
            <person name="Surzycki R."/>
            <person name="Thebault P."/>
            <person name="Vandenbol M."/>
            <person name="Vorhoelter F.J."/>
            <person name="Weidner S."/>
            <person name="Wells D.H."/>
            <person name="Wong K."/>
            <person name="Yeh K.-C."/>
            <person name="Batut J."/>
        </authorList>
    </citation>
    <scope>NUCLEOTIDE SEQUENCE [LARGE SCALE GENOMIC DNA]</scope>
    <source>
        <strain>1021</strain>
    </source>
</reference>
<reference key="4">
    <citation type="journal article" date="1999" name="Biochim. Biophys. Acta">
        <title>Characterization of two members of a novel malic enzyme class.</title>
        <authorList>
            <person name="Voegele R.T."/>
            <person name="Mitsch M.J."/>
            <person name="Finan T.M."/>
        </authorList>
    </citation>
    <scope>CHARACTERIZATION</scope>
</reference>
<organism>
    <name type="scientific">Rhizobium meliloti (strain 1021)</name>
    <name type="common">Ensifer meliloti</name>
    <name type="synonym">Sinorhizobium meliloti</name>
    <dbReference type="NCBI Taxonomy" id="266834"/>
    <lineage>
        <taxon>Bacteria</taxon>
        <taxon>Pseudomonadati</taxon>
        <taxon>Pseudomonadota</taxon>
        <taxon>Alphaproteobacteria</taxon>
        <taxon>Hyphomicrobiales</taxon>
        <taxon>Rhizobiaceae</taxon>
        <taxon>Sinorhizobium/Ensifer group</taxon>
        <taxon>Sinorhizobium</taxon>
    </lineage>
</organism>
<keyword id="KW-0479">Metal-binding</keyword>
<keyword id="KW-0511">Multifunctional enzyme</keyword>
<keyword id="KW-0521">NADP</keyword>
<keyword id="KW-0560">Oxidoreductase</keyword>
<keyword id="KW-1185">Reference proteome</keyword>
<protein>
    <recommendedName>
        <fullName>NADP-dependent malic enzyme</fullName>
        <shortName>NADP-ME</shortName>
        <ecNumber>1.1.1.40</ecNumber>
    </recommendedName>
</protein>
<comment type="catalytic activity">
    <reaction>
        <text>(S)-malate + NADP(+) = pyruvate + CO2 + NADPH</text>
        <dbReference type="Rhea" id="RHEA:18253"/>
        <dbReference type="ChEBI" id="CHEBI:15361"/>
        <dbReference type="ChEBI" id="CHEBI:15589"/>
        <dbReference type="ChEBI" id="CHEBI:16526"/>
        <dbReference type="ChEBI" id="CHEBI:57783"/>
        <dbReference type="ChEBI" id="CHEBI:58349"/>
        <dbReference type="EC" id="1.1.1.40"/>
    </reaction>
</comment>
<comment type="catalytic activity">
    <reaction>
        <text>oxaloacetate + H(+) = pyruvate + CO2</text>
        <dbReference type="Rhea" id="RHEA:15641"/>
        <dbReference type="ChEBI" id="CHEBI:15361"/>
        <dbReference type="ChEBI" id="CHEBI:15378"/>
        <dbReference type="ChEBI" id="CHEBI:16452"/>
        <dbReference type="ChEBI" id="CHEBI:16526"/>
        <dbReference type="EC" id="1.1.1.40"/>
    </reaction>
</comment>
<comment type="cofactor">
    <cofactor>
        <name>Mg(2+)</name>
        <dbReference type="ChEBI" id="CHEBI:18420"/>
    </cofactor>
    <cofactor>
        <name>Mn(2+)</name>
        <dbReference type="ChEBI" id="CHEBI:29035"/>
    </cofactor>
    <text>Divalent metal cations. Prefers magnesium or manganese.</text>
</comment>
<comment type="subunit">
    <text>Homooctamer.</text>
</comment>
<comment type="similarity">
    <text evidence="2">In the N-terminal section; belongs to the malic enzymes family.</text>
</comment>
<comment type="similarity">
    <text evidence="2">In the C-terminal section; belongs to the phosphate acetyltransferase and butyryltransferase family.</text>
</comment>
<name>MAO2_RHIME</name>
<proteinExistence type="evidence at protein level"/>
<dbReference type="EC" id="1.1.1.40"/>
<dbReference type="EMBL" id="AF017444">
    <property type="protein sequence ID" value="AAB82460.1"/>
    <property type="molecule type" value="Genomic_DNA"/>
</dbReference>
<dbReference type="EMBL" id="AL591688">
    <property type="protein sequence ID" value="CAC41831.1"/>
    <property type="molecule type" value="Genomic_DNA"/>
</dbReference>
<dbReference type="RefSeq" id="NP_384500.1">
    <property type="nucleotide sequence ID" value="NC_003047.1"/>
</dbReference>
<dbReference type="RefSeq" id="WP_010968547.1">
    <property type="nucleotide sequence ID" value="NC_003047.1"/>
</dbReference>
<dbReference type="SMR" id="O30808"/>
<dbReference type="EnsemblBacteria" id="CAC41831">
    <property type="protein sequence ID" value="CAC41831"/>
    <property type="gene ID" value="SMc01126"/>
</dbReference>
<dbReference type="KEGG" id="sme:SMc01126"/>
<dbReference type="PATRIC" id="fig|266834.11.peg.1767"/>
<dbReference type="eggNOG" id="COG0280">
    <property type="taxonomic scope" value="Bacteria"/>
</dbReference>
<dbReference type="eggNOG" id="COG0281">
    <property type="taxonomic scope" value="Bacteria"/>
</dbReference>
<dbReference type="HOGENOM" id="CLU_012366_0_0_5"/>
<dbReference type="OrthoDB" id="9805787at2"/>
<dbReference type="Proteomes" id="UP000001976">
    <property type="component" value="Chromosome"/>
</dbReference>
<dbReference type="GO" id="GO:0016746">
    <property type="term" value="F:acyltransferase activity"/>
    <property type="evidence" value="ECO:0007669"/>
    <property type="project" value="InterPro"/>
</dbReference>
<dbReference type="GO" id="GO:0004473">
    <property type="term" value="F:malate dehydrogenase (decarboxylating) (NADP+) activity"/>
    <property type="evidence" value="ECO:0007669"/>
    <property type="project" value="UniProtKB-EC"/>
</dbReference>
<dbReference type="GO" id="GO:0046872">
    <property type="term" value="F:metal ion binding"/>
    <property type="evidence" value="ECO:0007669"/>
    <property type="project" value="UniProtKB-KW"/>
</dbReference>
<dbReference type="GO" id="GO:0051287">
    <property type="term" value="F:NAD binding"/>
    <property type="evidence" value="ECO:0007669"/>
    <property type="project" value="InterPro"/>
</dbReference>
<dbReference type="GO" id="GO:0008948">
    <property type="term" value="F:oxaloacetate decarboxylase activity"/>
    <property type="evidence" value="ECO:0007669"/>
    <property type="project" value="RHEA"/>
</dbReference>
<dbReference type="GO" id="GO:0006108">
    <property type="term" value="P:malate metabolic process"/>
    <property type="evidence" value="ECO:0007669"/>
    <property type="project" value="InterPro"/>
</dbReference>
<dbReference type="CDD" id="cd05311">
    <property type="entry name" value="NAD_bind_2_malic_enz"/>
    <property type="match status" value="1"/>
</dbReference>
<dbReference type="FunFam" id="3.40.50.10380:FF:000003">
    <property type="entry name" value="NADP-dependent malic enzyme"/>
    <property type="match status" value="1"/>
</dbReference>
<dbReference type="FunFam" id="3.40.50.720:FF:000095">
    <property type="entry name" value="NADP-dependent malic enzyme"/>
    <property type="match status" value="1"/>
</dbReference>
<dbReference type="Gene3D" id="3.40.50.10950">
    <property type="match status" value="1"/>
</dbReference>
<dbReference type="Gene3D" id="3.40.50.10750">
    <property type="entry name" value="Isocitrate/Isopropylmalate dehydrogenase-like"/>
    <property type="match status" value="1"/>
</dbReference>
<dbReference type="Gene3D" id="3.40.50.10380">
    <property type="entry name" value="Malic enzyme, N-terminal domain"/>
    <property type="match status" value="1"/>
</dbReference>
<dbReference type="Gene3D" id="3.40.50.720">
    <property type="entry name" value="NAD(P)-binding Rossmann-like Domain"/>
    <property type="match status" value="1"/>
</dbReference>
<dbReference type="InterPro" id="IPR046346">
    <property type="entry name" value="Aminoacid_DH-like_N_sf"/>
</dbReference>
<dbReference type="InterPro" id="IPR051674">
    <property type="entry name" value="Malate_Decarboxylase"/>
</dbReference>
<dbReference type="InterPro" id="IPR015884">
    <property type="entry name" value="Malic_enzyme_CS"/>
</dbReference>
<dbReference type="InterPro" id="IPR012301">
    <property type="entry name" value="Malic_N_dom"/>
</dbReference>
<dbReference type="InterPro" id="IPR037062">
    <property type="entry name" value="Malic_N_dom_sf"/>
</dbReference>
<dbReference type="InterPro" id="IPR012302">
    <property type="entry name" value="Malic_NAD-bd"/>
</dbReference>
<dbReference type="InterPro" id="IPR045213">
    <property type="entry name" value="Malic_NAD-bd_bact_type"/>
</dbReference>
<dbReference type="InterPro" id="IPR012188">
    <property type="entry name" value="ME_PTA"/>
</dbReference>
<dbReference type="InterPro" id="IPR036291">
    <property type="entry name" value="NAD(P)-bd_dom_sf"/>
</dbReference>
<dbReference type="InterPro" id="IPR042113">
    <property type="entry name" value="P_AcTrfase_dom1"/>
</dbReference>
<dbReference type="InterPro" id="IPR042112">
    <property type="entry name" value="P_AcTrfase_dom2"/>
</dbReference>
<dbReference type="InterPro" id="IPR002505">
    <property type="entry name" value="PTA_PTB"/>
</dbReference>
<dbReference type="PANTHER" id="PTHR43237">
    <property type="entry name" value="NADP-DEPENDENT MALIC ENZYME"/>
    <property type="match status" value="1"/>
</dbReference>
<dbReference type="PANTHER" id="PTHR43237:SF4">
    <property type="entry name" value="NADP-DEPENDENT MALIC ENZYME"/>
    <property type="match status" value="1"/>
</dbReference>
<dbReference type="Pfam" id="PF00390">
    <property type="entry name" value="malic"/>
    <property type="match status" value="1"/>
</dbReference>
<dbReference type="Pfam" id="PF03949">
    <property type="entry name" value="Malic_M"/>
    <property type="match status" value="1"/>
</dbReference>
<dbReference type="Pfam" id="PF01515">
    <property type="entry name" value="PTA_PTB"/>
    <property type="match status" value="1"/>
</dbReference>
<dbReference type="PIRSF" id="PIRSF036684">
    <property type="entry name" value="ME_PTA"/>
    <property type="match status" value="1"/>
</dbReference>
<dbReference type="SMART" id="SM01274">
    <property type="entry name" value="malic"/>
    <property type="match status" value="1"/>
</dbReference>
<dbReference type="SMART" id="SM00919">
    <property type="entry name" value="Malic_M"/>
    <property type="match status" value="1"/>
</dbReference>
<dbReference type="SUPFAM" id="SSF53223">
    <property type="entry name" value="Aminoacid dehydrogenase-like, N-terminal domain"/>
    <property type="match status" value="1"/>
</dbReference>
<dbReference type="SUPFAM" id="SSF53659">
    <property type="entry name" value="Isocitrate/Isopropylmalate dehydrogenase-like"/>
    <property type="match status" value="1"/>
</dbReference>
<dbReference type="SUPFAM" id="SSF51735">
    <property type="entry name" value="NAD(P)-binding Rossmann-fold domains"/>
    <property type="match status" value="1"/>
</dbReference>
<dbReference type="PROSITE" id="PS00331">
    <property type="entry name" value="MALIC_ENZYMES"/>
    <property type="match status" value="1"/>
</dbReference>
<sequence length="761" mass="82209">MPGIDKTDRAMTSVTAQEALDFHSQGRPGKLEISPTKPMATQRDLSLAYSPGVAVPVKAIADDPATAYDYTARGNMVAVISNGTAILGLGNLGALASKPVMEGKAVLFKRFADVDSIDLEVDTENVDEFVNCVRFLGPSFGGINLEDIKAPDCFIIEQRLREVMDIPVFHDDQHGTAIIAAAGLVNALTLTGRDFKTAKLVCNGAGAAAIACIELIKAMGFNPENIILCDTKGVIYKGRTDGMNQWKSAHAVETDRRTLAEALDGADVFFGLSAKGALSADMVRSMGARPIIFAMANPDPEITPEEVALIRDDAIVATGRSDYPNQVNNVLGFPYIFRGALDVRASTINDAMKIAAAEALANLAKEDVPDDVAAAYQGNRPRFGPQYIIPVPFDPRLISAIPMAVAKAAMETGVARKPIEDLKAYGQQLSARRDPIASTLQRIVERVRRQPKRIVFAEGEEVQMMRSAIAYANQQLGTALLLGREEVMRETAEREGIDLDRAGIQIVNARLSKRVGAYTDFLYSRLQRKGYLFRDVQRLINTDRNHFAASMVALGDADGMVTGLTRNYSTALEDVRRCIDPKPGHRVIGVSIALCRGRTVLVADTAVHDMPTSEELADIAEEAAGLAKRLGYVPRVAMLAYSTFGHPSGERSERVREAVKILDRRRVDFEYDGEMAADVALNARVMEQYPFCRLSGTANVLVMPAFHSASISTKMLQELGGSTVIGPLLVGLDKSVQIASMSAKDSDLVNLAAIAAYNAGT</sequence>
<gene>
    <name type="primary">tme</name>
    <name type="ordered locus">R00394</name>
    <name type="ORF">SMc01126</name>
</gene>